<evidence type="ECO:0000255" key="1">
    <source>
        <dbReference type="HAMAP-Rule" id="MF_01691"/>
    </source>
</evidence>
<organism>
    <name type="scientific">Staphylococcus epidermidis (strain ATCC 35984 / DSM 28319 / BCRC 17069 / CCUG 31568 / BM 3577 / RP62A)</name>
    <dbReference type="NCBI Taxonomy" id="176279"/>
    <lineage>
        <taxon>Bacteria</taxon>
        <taxon>Bacillati</taxon>
        <taxon>Bacillota</taxon>
        <taxon>Bacilli</taxon>
        <taxon>Bacillales</taxon>
        <taxon>Staphylococcaceae</taxon>
        <taxon>Staphylococcus</taxon>
    </lineage>
</organism>
<sequence>MVQHLSAQEIIQYISDAKKSTPLKVYVNGHFENVTFPESFKVFGSEHSKVIFCEADEWKQFYQKNHSLITELEIEMDRRNSAIPLKDLTNTNARIEPGAFIREQAIIEDGAVVMMGATINIGAIVGEGTMIDMNATLGGRATTGKNVHVGAGAVLAGVIEPPSASPVVIEDNVLIGANAVILEGVRVGAGAIVAAGAIVTQDVPAGAVVAGTPAKVIKQTSEVQDSKREIVSALRKLNNE</sequence>
<protein>
    <recommendedName>
        <fullName evidence="1">2,3,4,5-tetrahydropyridine-2,6-dicarboxylate N-acetyltransferase</fullName>
        <ecNumber evidence="1">2.3.1.89</ecNumber>
    </recommendedName>
    <alternativeName>
        <fullName evidence="1">Tetrahydrodipicolinate N-acetyltransferase</fullName>
        <shortName evidence="1">THP acetyltransferase</shortName>
        <shortName evidence="1">Tetrahydropicolinate acetylase</shortName>
    </alternativeName>
</protein>
<gene>
    <name evidence="1" type="primary">dapH</name>
    <name type="ordered locus">SERP0967</name>
</gene>
<feature type="chain" id="PRO_0000376703" description="2,3,4,5-tetrahydropyridine-2,6-dicarboxylate N-acetyltransferase">
    <location>
        <begin position="1"/>
        <end position="240"/>
    </location>
</feature>
<comment type="function">
    <text evidence="1">Catalyzes the transfer of an acetyl group from acetyl-CoA to tetrahydrodipicolinate.</text>
</comment>
<comment type="catalytic activity">
    <reaction evidence="1">
        <text>(S)-2,3,4,5-tetrahydrodipicolinate + acetyl-CoA + H2O = L-2-acetamido-6-oxoheptanedioate + CoA</text>
        <dbReference type="Rhea" id="RHEA:13085"/>
        <dbReference type="ChEBI" id="CHEBI:15377"/>
        <dbReference type="ChEBI" id="CHEBI:16845"/>
        <dbReference type="ChEBI" id="CHEBI:57287"/>
        <dbReference type="ChEBI" id="CHEBI:57288"/>
        <dbReference type="ChEBI" id="CHEBI:58117"/>
        <dbReference type="EC" id="2.3.1.89"/>
    </reaction>
</comment>
<comment type="pathway">
    <text evidence="1">Amino-acid biosynthesis; L-lysine biosynthesis via DAP pathway; LL-2,6-diaminopimelate from (S)-tetrahydrodipicolinate (acetylase route): step 1/3.</text>
</comment>
<comment type="similarity">
    <text evidence="1">Belongs to the transferase hexapeptide repeat family. DapH subfamily.</text>
</comment>
<accession>Q5HPE5</accession>
<name>DAPH_STAEQ</name>
<proteinExistence type="inferred from homology"/>
<keyword id="KW-0012">Acyltransferase</keyword>
<keyword id="KW-0028">Amino-acid biosynthesis</keyword>
<keyword id="KW-0220">Diaminopimelate biosynthesis</keyword>
<keyword id="KW-0457">Lysine biosynthesis</keyword>
<keyword id="KW-1185">Reference proteome</keyword>
<keyword id="KW-0677">Repeat</keyword>
<keyword id="KW-0808">Transferase</keyword>
<dbReference type="EC" id="2.3.1.89" evidence="1"/>
<dbReference type="EMBL" id="CP000029">
    <property type="protein sequence ID" value="AAW54299.1"/>
    <property type="molecule type" value="Genomic_DNA"/>
</dbReference>
<dbReference type="SMR" id="Q5HPE5"/>
<dbReference type="STRING" id="176279.SERP0967"/>
<dbReference type="KEGG" id="ser:SERP0967"/>
<dbReference type="eggNOG" id="COG2171">
    <property type="taxonomic scope" value="Bacteria"/>
</dbReference>
<dbReference type="HOGENOM" id="CLU_103751_0_0_9"/>
<dbReference type="UniPathway" id="UPA00034">
    <property type="reaction ID" value="UER00022"/>
</dbReference>
<dbReference type="Proteomes" id="UP000000531">
    <property type="component" value="Chromosome"/>
</dbReference>
<dbReference type="GO" id="GO:0047200">
    <property type="term" value="F:tetrahydrodipicolinate N-acetyltransferase activity"/>
    <property type="evidence" value="ECO:0007669"/>
    <property type="project" value="UniProtKB-EC"/>
</dbReference>
<dbReference type="GO" id="GO:0019877">
    <property type="term" value="P:diaminopimelate biosynthetic process"/>
    <property type="evidence" value="ECO:0007669"/>
    <property type="project" value="UniProtKB-UniRule"/>
</dbReference>
<dbReference type="GO" id="GO:0009089">
    <property type="term" value="P:lysine biosynthetic process via diaminopimelate"/>
    <property type="evidence" value="ECO:0007669"/>
    <property type="project" value="UniProtKB-UniRule"/>
</dbReference>
<dbReference type="CDD" id="cd03350">
    <property type="entry name" value="LbH_THP_succinylT"/>
    <property type="match status" value="1"/>
</dbReference>
<dbReference type="Gene3D" id="2.160.10.10">
    <property type="entry name" value="Hexapeptide repeat proteins"/>
    <property type="match status" value="1"/>
</dbReference>
<dbReference type="Gene3D" id="3.30.70.250">
    <property type="entry name" value="Malonyl-CoA ACP transacylase, ACP-binding"/>
    <property type="match status" value="1"/>
</dbReference>
<dbReference type="HAMAP" id="MF_01691">
    <property type="entry name" value="DapH"/>
    <property type="match status" value="1"/>
</dbReference>
<dbReference type="InterPro" id="IPR019873">
    <property type="entry name" value="DapH"/>
</dbReference>
<dbReference type="InterPro" id="IPR013710">
    <property type="entry name" value="DapH_N"/>
</dbReference>
<dbReference type="InterPro" id="IPR001451">
    <property type="entry name" value="Hexapep"/>
</dbReference>
<dbReference type="InterPro" id="IPR018357">
    <property type="entry name" value="Hexapep_transf_CS"/>
</dbReference>
<dbReference type="InterPro" id="IPR050179">
    <property type="entry name" value="Trans_hexapeptide_repeat"/>
</dbReference>
<dbReference type="InterPro" id="IPR011004">
    <property type="entry name" value="Trimer_LpxA-like_sf"/>
</dbReference>
<dbReference type="NCBIfam" id="TIGR03532">
    <property type="entry name" value="DapD_Ac"/>
    <property type="match status" value="1"/>
</dbReference>
<dbReference type="PANTHER" id="PTHR43300:SF10">
    <property type="entry name" value="2,3,4,5-TETRAHYDROPYRIDINE-2,6-DICARBOXYLATE N-ACETYLTRANSFERASE"/>
    <property type="match status" value="1"/>
</dbReference>
<dbReference type="PANTHER" id="PTHR43300">
    <property type="entry name" value="ACETYLTRANSFERASE"/>
    <property type="match status" value="1"/>
</dbReference>
<dbReference type="Pfam" id="PF08503">
    <property type="entry name" value="DapH_N"/>
    <property type="match status" value="1"/>
</dbReference>
<dbReference type="Pfam" id="PF14602">
    <property type="entry name" value="Hexapep_2"/>
    <property type="match status" value="1"/>
</dbReference>
<dbReference type="SUPFAM" id="SSF51161">
    <property type="entry name" value="Trimeric LpxA-like enzymes"/>
    <property type="match status" value="1"/>
</dbReference>
<dbReference type="PROSITE" id="PS00101">
    <property type="entry name" value="HEXAPEP_TRANSFERASES"/>
    <property type="match status" value="1"/>
</dbReference>
<reference key="1">
    <citation type="journal article" date="2005" name="J. Bacteriol.">
        <title>Insights on evolution of virulence and resistance from the complete genome analysis of an early methicillin-resistant Staphylococcus aureus strain and a biofilm-producing methicillin-resistant Staphylococcus epidermidis strain.</title>
        <authorList>
            <person name="Gill S.R."/>
            <person name="Fouts D.E."/>
            <person name="Archer G.L."/>
            <person name="Mongodin E.F."/>
            <person name="DeBoy R.T."/>
            <person name="Ravel J."/>
            <person name="Paulsen I.T."/>
            <person name="Kolonay J.F."/>
            <person name="Brinkac L.M."/>
            <person name="Beanan M.J."/>
            <person name="Dodson R.J."/>
            <person name="Daugherty S.C."/>
            <person name="Madupu R."/>
            <person name="Angiuoli S.V."/>
            <person name="Durkin A.S."/>
            <person name="Haft D.H."/>
            <person name="Vamathevan J.J."/>
            <person name="Khouri H."/>
            <person name="Utterback T.R."/>
            <person name="Lee C."/>
            <person name="Dimitrov G."/>
            <person name="Jiang L."/>
            <person name="Qin H."/>
            <person name="Weidman J."/>
            <person name="Tran K."/>
            <person name="Kang K.H."/>
            <person name="Hance I.R."/>
            <person name="Nelson K.E."/>
            <person name="Fraser C.M."/>
        </authorList>
    </citation>
    <scope>NUCLEOTIDE SEQUENCE [LARGE SCALE GENOMIC DNA]</scope>
    <source>
        <strain>ATCC 35984 / DSM 28319 / BCRC 17069 / CCUG 31568 / BM 3577 / RP62A</strain>
    </source>
</reference>